<organism>
    <name type="scientific">Staphylococcus aureus (strain JH1)</name>
    <dbReference type="NCBI Taxonomy" id="359787"/>
    <lineage>
        <taxon>Bacteria</taxon>
        <taxon>Bacillati</taxon>
        <taxon>Bacillota</taxon>
        <taxon>Bacilli</taxon>
        <taxon>Bacillales</taxon>
        <taxon>Staphylococcaceae</taxon>
        <taxon>Staphylococcus</taxon>
    </lineage>
</organism>
<feature type="chain" id="PRO_1000086463" description="Large ribosomal subunit protein uL3">
    <location>
        <begin position="1"/>
        <end position="220"/>
    </location>
</feature>
<feature type="region of interest" description="Disordered" evidence="2">
    <location>
        <begin position="130"/>
        <end position="156"/>
    </location>
</feature>
<name>RL3_STAA2</name>
<dbReference type="EMBL" id="CP000736">
    <property type="protein sequence ID" value="ABR53143.1"/>
    <property type="molecule type" value="Genomic_DNA"/>
</dbReference>
<dbReference type="SMR" id="A6U3X5"/>
<dbReference type="KEGG" id="sah:SaurJH1_2318"/>
<dbReference type="HOGENOM" id="CLU_044142_4_1_9"/>
<dbReference type="GO" id="GO:0022625">
    <property type="term" value="C:cytosolic large ribosomal subunit"/>
    <property type="evidence" value="ECO:0007669"/>
    <property type="project" value="TreeGrafter"/>
</dbReference>
<dbReference type="GO" id="GO:0019843">
    <property type="term" value="F:rRNA binding"/>
    <property type="evidence" value="ECO:0007669"/>
    <property type="project" value="UniProtKB-UniRule"/>
</dbReference>
<dbReference type="GO" id="GO:0003735">
    <property type="term" value="F:structural constituent of ribosome"/>
    <property type="evidence" value="ECO:0007669"/>
    <property type="project" value="InterPro"/>
</dbReference>
<dbReference type="GO" id="GO:0006412">
    <property type="term" value="P:translation"/>
    <property type="evidence" value="ECO:0007669"/>
    <property type="project" value="UniProtKB-UniRule"/>
</dbReference>
<dbReference type="FunFam" id="2.40.30.10:FF:000004">
    <property type="entry name" value="50S ribosomal protein L3"/>
    <property type="match status" value="1"/>
</dbReference>
<dbReference type="FunFam" id="3.30.160.810:FF:000002">
    <property type="entry name" value="50S ribosomal protein L3"/>
    <property type="match status" value="1"/>
</dbReference>
<dbReference type="Gene3D" id="3.30.160.810">
    <property type="match status" value="1"/>
</dbReference>
<dbReference type="Gene3D" id="2.40.30.10">
    <property type="entry name" value="Translation factors"/>
    <property type="match status" value="1"/>
</dbReference>
<dbReference type="HAMAP" id="MF_01325_B">
    <property type="entry name" value="Ribosomal_uL3_B"/>
    <property type="match status" value="1"/>
</dbReference>
<dbReference type="InterPro" id="IPR000597">
    <property type="entry name" value="Ribosomal_uL3"/>
</dbReference>
<dbReference type="InterPro" id="IPR019927">
    <property type="entry name" value="Ribosomal_uL3_bac/org-type"/>
</dbReference>
<dbReference type="InterPro" id="IPR019926">
    <property type="entry name" value="Ribosomal_uL3_CS"/>
</dbReference>
<dbReference type="InterPro" id="IPR009000">
    <property type="entry name" value="Transl_B-barrel_sf"/>
</dbReference>
<dbReference type="NCBIfam" id="TIGR03625">
    <property type="entry name" value="L3_bact"/>
    <property type="match status" value="1"/>
</dbReference>
<dbReference type="PANTHER" id="PTHR11229">
    <property type="entry name" value="50S RIBOSOMAL PROTEIN L3"/>
    <property type="match status" value="1"/>
</dbReference>
<dbReference type="PANTHER" id="PTHR11229:SF16">
    <property type="entry name" value="LARGE RIBOSOMAL SUBUNIT PROTEIN UL3C"/>
    <property type="match status" value="1"/>
</dbReference>
<dbReference type="Pfam" id="PF00297">
    <property type="entry name" value="Ribosomal_L3"/>
    <property type="match status" value="1"/>
</dbReference>
<dbReference type="SUPFAM" id="SSF50447">
    <property type="entry name" value="Translation proteins"/>
    <property type="match status" value="1"/>
</dbReference>
<dbReference type="PROSITE" id="PS00474">
    <property type="entry name" value="RIBOSOMAL_L3"/>
    <property type="match status" value="1"/>
</dbReference>
<evidence type="ECO:0000255" key="1">
    <source>
        <dbReference type="HAMAP-Rule" id="MF_01325"/>
    </source>
</evidence>
<evidence type="ECO:0000256" key="2">
    <source>
        <dbReference type="SAM" id="MobiDB-lite"/>
    </source>
</evidence>
<evidence type="ECO:0000305" key="3"/>
<reference key="1">
    <citation type="submission" date="2007-06" db="EMBL/GenBank/DDBJ databases">
        <title>Complete sequence of chromosome of Staphylococcus aureus subsp. aureus JH1.</title>
        <authorList>
            <consortium name="US DOE Joint Genome Institute"/>
            <person name="Copeland A."/>
            <person name="Lucas S."/>
            <person name="Lapidus A."/>
            <person name="Barry K."/>
            <person name="Detter J.C."/>
            <person name="Glavina del Rio T."/>
            <person name="Hammon N."/>
            <person name="Israni S."/>
            <person name="Dalin E."/>
            <person name="Tice H."/>
            <person name="Pitluck S."/>
            <person name="Chain P."/>
            <person name="Malfatti S."/>
            <person name="Shin M."/>
            <person name="Vergez L."/>
            <person name="Schmutz J."/>
            <person name="Larimer F."/>
            <person name="Land M."/>
            <person name="Hauser L."/>
            <person name="Kyrpides N."/>
            <person name="Ivanova N."/>
            <person name="Tomasz A."/>
            <person name="Richardson P."/>
        </authorList>
    </citation>
    <scope>NUCLEOTIDE SEQUENCE [LARGE SCALE GENOMIC DNA]</scope>
    <source>
        <strain>JH1</strain>
    </source>
</reference>
<sequence length="220" mass="23718">MTKGILGRKIGMTQVFGENGELIPVTVVEAKENVVLQKKTVEVDGYNAIQVGFEDKKAYKKDAKSNKYANKPAEGHAKKADAAPKRFIREFRNVDVDAYEVGQEVSVDTFVAGDVIDVTGVSKGKGFQGAIKRHGQSRGPMSHGSHFHRAPGSVGMASDASRVFKGQKMPGRMGGNTVTVQNLEVVQVDTENKVILVKGNVPGPKKGLVEIRTSIKKGNK</sequence>
<keyword id="KW-0687">Ribonucleoprotein</keyword>
<keyword id="KW-0689">Ribosomal protein</keyword>
<keyword id="KW-0694">RNA-binding</keyword>
<keyword id="KW-0699">rRNA-binding</keyword>
<accession>A6U3X5</accession>
<protein>
    <recommendedName>
        <fullName evidence="1">Large ribosomal subunit protein uL3</fullName>
    </recommendedName>
    <alternativeName>
        <fullName evidence="3">50S ribosomal protein L3</fullName>
    </alternativeName>
</protein>
<comment type="function">
    <text evidence="1">One of the primary rRNA binding proteins, it binds directly near the 3'-end of the 23S rRNA, where it nucleates assembly of the 50S subunit.</text>
</comment>
<comment type="subunit">
    <text evidence="1">Part of the 50S ribosomal subunit. Forms a cluster with proteins L14 and L19.</text>
</comment>
<comment type="similarity">
    <text evidence="1">Belongs to the universal ribosomal protein uL3 family.</text>
</comment>
<gene>
    <name evidence="1" type="primary">rplC</name>
    <name type="ordered locus">SaurJH1_2318</name>
</gene>
<proteinExistence type="inferred from homology"/>